<sequence length="142" mass="15567">MVLSPDDKKHVKAAWGKVGEHAGEYGAEALERMFLSFPTTKTYFPHFDLSHGSDQVNKHGKKVADALTLAVGHVDDMPQALSKLSDLHAHKLRVDPVNFKLLSHCLLVTLAAHLPAEFTPAVHASLDKFLASVSTVLTSKYR</sequence>
<name>HBA_PAPCY</name>
<organism>
    <name type="scientific">Papio cynocephalus</name>
    <name type="common">Yellow baboon</name>
    <dbReference type="NCBI Taxonomy" id="9556"/>
    <lineage>
        <taxon>Eukaryota</taxon>
        <taxon>Metazoa</taxon>
        <taxon>Chordata</taxon>
        <taxon>Craniata</taxon>
        <taxon>Vertebrata</taxon>
        <taxon>Euteleostomi</taxon>
        <taxon>Mammalia</taxon>
        <taxon>Eutheria</taxon>
        <taxon>Euarchontoglires</taxon>
        <taxon>Primates</taxon>
        <taxon>Haplorrhini</taxon>
        <taxon>Catarrhini</taxon>
        <taxon>Cercopithecidae</taxon>
        <taxon>Cercopithecinae</taxon>
        <taxon>Papio</taxon>
    </lineage>
</organism>
<evidence type="ECO:0000250" key="1">
    <source>
        <dbReference type="UniProtKB" id="P01942"/>
    </source>
</evidence>
<evidence type="ECO:0000250" key="2">
    <source>
        <dbReference type="UniProtKB" id="P01946"/>
    </source>
</evidence>
<evidence type="ECO:0000250" key="3">
    <source>
        <dbReference type="UniProtKB" id="P69905"/>
    </source>
</evidence>
<evidence type="ECO:0000255" key="4">
    <source>
        <dbReference type="PROSITE-ProRule" id="PRU00238"/>
    </source>
</evidence>
<evidence type="ECO:0000269" key="5">
    <source>
    </source>
</evidence>
<feature type="initiator methionine" description="Removed" evidence="5">
    <location>
        <position position="1"/>
    </location>
</feature>
<feature type="chain" id="PRO_0000052724" description="Hemoglobin subunit alpha">
    <location>
        <begin position="2"/>
        <end position="142"/>
    </location>
</feature>
<feature type="peptide" id="PRO_0000455923" description="Hemopressin" evidence="2">
    <location>
        <begin position="96"/>
        <end position="104"/>
    </location>
</feature>
<feature type="domain" description="Globin" evidence="4">
    <location>
        <begin position="2"/>
        <end position="142"/>
    </location>
</feature>
<feature type="binding site" evidence="4">
    <location>
        <position position="59"/>
    </location>
    <ligand>
        <name>O2</name>
        <dbReference type="ChEBI" id="CHEBI:15379"/>
    </ligand>
</feature>
<feature type="binding site" description="proximal binding residue" evidence="4">
    <location>
        <position position="88"/>
    </location>
    <ligand>
        <name>heme b</name>
        <dbReference type="ChEBI" id="CHEBI:60344"/>
    </ligand>
    <ligandPart>
        <name>Fe</name>
        <dbReference type="ChEBI" id="CHEBI:18248"/>
    </ligandPart>
</feature>
<feature type="modified residue" description="Phosphoserine" evidence="3">
    <location>
        <position position="4"/>
    </location>
</feature>
<feature type="modified residue" description="N6-succinyllysine" evidence="1">
    <location>
        <position position="8"/>
    </location>
</feature>
<feature type="modified residue" description="N6-succinyllysine" evidence="1">
    <location>
        <position position="12"/>
    </location>
</feature>
<feature type="modified residue" description="N6-acetyllysine; alternate" evidence="3">
    <location>
        <position position="17"/>
    </location>
</feature>
<feature type="modified residue" description="N6-succinyllysine; alternate" evidence="1">
    <location>
        <position position="17"/>
    </location>
</feature>
<feature type="modified residue" description="Phosphotyrosine" evidence="3">
    <location>
        <position position="25"/>
    </location>
</feature>
<feature type="modified residue" description="Phosphoserine" evidence="3">
    <location>
        <position position="36"/>
    </location>
</feature>
<feature type="modified residue" description="N6-succinyllysine" evidence="1">
    <location>
        <position position="41"/>
    </location>
</feature>
<feature type="modified residue" description="Phosphoserine" evidence="3">
    <location>
        <position position="50"/>
    </location>
</feature>
<feature type="modified residue" description="Phosphoserine" evidence="1">
    <location>
        <position position="103"/>
    </location>
</feature>
<feature type="modified residue" description="Phosphothreonine" evidence="1">
    <location>
        <position position="109"/>
    </location>
</feature>
<feature type="modified residue" description="Phosphoserine" evidence="1">
    <location>
        <position position="125"/>
    </location>
</feature>
<feature type="modified residue" description="Phosphoserine" evidence="1">
    <location>
        <position position="132"/>
    </location>
</feature>
<feature type="modified residue" description="Phosphothreonine" evidence="1">
    <location>
        <position position="135"/>
    </location>
</feature>
<feature type="modified residue" description="Phosphothreonine" evidence="1">
    <location>
        <position position="138"/>
    </location>
</feature>
<feature type="modified residue" description="Phosphoserine" evidence="1">
    <location>
        <position position="139"/>
    </location>
</feature>
<protein>
    <recommendedName>
        <fullName>Hemoglobin subunit alpha</fullName>
    </recommendedName>
    <alternativeName>
        <fullName>Alpha-globin</fullName>
    </alternativeName>
    <alternativeName>
        <fullName>Hemoglobin alpha chain</fullName>
    </alternativeName>
    <component>
        <recommendedName>
            <fullName evidence="2">Hemopressin</fullName>
        </recommendedName>
    </component>
</protein>
<reference key="1">
    <citation type="journal article" date="1980" name="Biochemistry">
        <title>Amino acid sequence of the hemoglobin alpha chain from a baboon (Papio cynocephalus): a product of gene fusion?</title>
        <authorList>
            <person name="Mahoney W.C."/>
            <person name="Nute P.E."/>
        </authorList>
    </citation>
    <scope>PROTEIN SEQUENCE OF 2-142</scope>
</reference>
<gene>
    <name type="primary">HBA</name>
</gene>
<proteinExistence type="evidence at protein level"/>
<accession>P63112</accession>
<accession>P01931</accession>
<dbReference type="PIR" id="A02257">
    <property type="entry name" value="HABAY"/>
</dbReference>
<dbReference type="SMR" id="P63112"/>
<dbReference type="GO" id="GO:0072562">
    <property type="term" value="C:blood microparticle"/>
    <property type="evidence" value="ECO:0007669"/>
    <property type="project" value="TreeGrafter"/>
</dbReference>
<dbReference type="GO" id="GO:0031838">
    <property type="term" value="C:haptoglobin-hemoglobin complex"/>
    <property type="evidence" value="ECO:0007669"/>
    <property type="project" value="TreeGrafter"/>
</dbReference>
<dbReference type="GO" id="GO:0005833">
    <property type="term" value="C:hemoglobin complex"/>
    <property type="evidence" value="ECO:0007669"/>
    <property type="project" value="InterPro"/>
</dbReference>
<dbReference type="GO" id="GO:0031720">
    <property type="term" value="F:haptoglobin binding"/>
    <property type="evidence" value="ECO:0007669"/>
    <property type="project" value="TreeGrafter"/>
</dbReference>
<dbReference type="GO" id="GO:0020037">
    <property type="term" value="F:heme binding"/>
    <property type="evidence" value="ECO:0007669"/>
    <property type="project" value="InterPro"/>
</dbReference>
<dbReference type="GO" id="GO:0005506">
    <property type="term" value="F:iron ion binding"/>
    <property type="evidence" value="ECO:0007669"/>
    <property type="project" value="InterPro"/>
</dbReference>
<dbReference type="GO" id="GO:0043177">
    <property type="term" value="F:organic acid binding"/>
    <property type="evidence" value="ECO:0007669"/>
    <property type="project" value="TreeGrafter"/>
</dbReference>
<dbReference type="GO" id="GO:0019825">
    <property type="term" value="F:oxygen binding"/>
    <property type="evidence" value="ECO:0007669"/>
    <property type="project" value="InterPro"/>
</dbReference>
<dbReference type="GO" id="GO:0005344">
    <property type="term" value="F:oxygen carrier activity"/>
    <property type="evidence" value="ECO:0007669"/>
    <property type="project" value="UniProtKB-KW"/>
</dbReference>
<dbReference type="GO" id="GO:0004601">
    <property type="term" value="F:peroxidase activity"/>
    <property type="evidence" value="ECO:0007669"/>
    <property type="project" value="TreeGrafter"/>
</dbReference>
<dbReference type="GO" id="GO:0042744">
    <property type="term" value="P:hydrogen peroxide catabolic process"/>
    <property type="evidence" value="ECO:0007669"/>
    <property type="project" value="TreeGrafter"/>
</dbReference>
<dbReference type="CDD" id="cd08927">
    <property type="entry name" value="Hb-alpha-like"/>
    <property type="match status" value="1"/>
</dbReference>
<dbReference type="FunFam" id="1.10.490.10:FF:000002">
    <property type="entry name" value="Hemoglobin subunit alpha"/>
    <property type="match status" value="1"/>
</dbReference>
<dbReference type="Gene3D" id="1.10.490.10">
    <property type="entry name" value="Globins"/>
    <property type="match status" value="1"/>
</dbReference>
<dbReference type="InterPro" id="IPR000971">
    <property type="entry name" value="Globin"/>
</dbReference>
<dbReference type="InterPro" id="IPR009050">
    <property type="entry name" value="Globin-like_sf"/>
</dbReference>
<dbReference type="InterPro" id="IPR012292">
    <property type="entry name" value="Globin/Proto"/>
</dbReference>
<dbReference type="InterPro" id="IPR002338">
    <property type="entry name" value="Hemoglobin_a-typ"/>
</dbReference>
<dbReference type="InterPro" id="IPR050056">
    <property type="entry name" value="Hemoglobin_oxygen_transport"/>
</dbReference>
<dbReference type="InterPro" id="IPR002339">
    <property type="entry name" value="Hemoglobin_pi"/>
</dbReference>
<dbReference type="PANTHER" id="PTHR11442">
    <property type="entry name" value="HEMOGLOBIN FAMILY MEMBER"/>
    <property type="match status" value="1"/>
</dbReference>
<dbReference type="PANTHER" id="PTHR11442:SF48">
    <property type="entry name" value="HEMOGLOBIN SUBUNIT ALPHA"/>
    <property type="match status" value="1"/>
</dbReference>
<dbReference type="Pfam" id="PF00042">
    <property type="entry name" value="Globin"/>
    <property type="match status" value="1"/>
</dbReference>
<dbReference type="PRINTS" id="PR00612">
    <property type="entry name" value="ALPHAHAEM"/>
</dbReference>
<dbReference type="PRINTS" id="PR00815">
    <property type="entry name" value="PIHAEM"/>
</dbReference>
<dbReference type="SUPFAM" id="SSF46458">
    <property type="entry name" value="Globin-like"/>
    <property type="match status" value="1"/>
</dbReference>
<dbReference type="PROSITE" id="PS01033">
    <property type="entry name" value="GLOBIN"/>
    <property type="match status" value="1"/>
</dbReference>
<comment type="function">
    <text>Involved in oxygen transport from the lung to the various peripheral tissues.</text>
</comment>
<comment type="function">
    <molecule>Hemopressin</molecule>
    <text evidence="2">Hemopressin acts as an antagonist peptide of the cannabinoid receptor CNR1. Hemopressin-binding efficiently blocks cannabinoid receptor CNR1 and subsequent signaling.</text>
</comment>
<comment type="subunit">
    <text>Heterotetramer of two alpha chains and two beta chains.</text>
</comment>
<comment type="tissue specificity">
    <text>Red blood cells.</text>
</comment>
<comment type="similarity">
    <text evidence="4">Belongs to the globin family.</text>
</comment>
<keyword id="KW-0007">Acetylation</keyword>
<keyword id="KW-0903">Direct protein sequencing</keyword>
<keyword id="KW-0349">Heme</keyword>
<keyword id="KW-0408">Iron</keyword>
<keyword id="KW-0479">Metal-binding</keyword>
<keyword id="KW-0561">Oxygen transport</keyword>
<keyword id="KW-0597">Phosphoprotein</keyword>
<keyword id="KW-0813">Transport</keyword>